<reference key="1">
    <citation type="journal article" date="1998" name="J. Bacteriol.">
        <title>Phosphate assimilation in Rhizobium (Sinorhizobium) meliloti: identification of a pit-like gene.</title>
        <authorList>
            <person name="Bardin S.D."/>
            <person name="Voegele R.T."/>
            <person name="Finan T.M."/>
        </authorList>
    </citation>
    <scope>NUCLEOTIDE SEQUENCE [GENOMIC DNA]</scope>
    <source>
        <strain>SU47 / 1021</strain>
    </source>
</reference>
<reference key="2">
    <citation type="journal article" date="2001" name="Proc. Natl. Acad. Sci. U.S.A.">
        <title>Analysis of the chromosome sequence of the legume symbiont Sinorhizobium meliloti strain 1021.</title>
        <authorList>
            <person name="Capela D."/>
            <person name="Barloy-Hubler F."/>
            <person name="Gouzy J."/>
            <person name="Bothe G."/>
            <person name="Ampe F."/>
            <person name="Batut J."/>
            <person name="Boistard P."/>
            <person name="Becker A."/>
            <person name="Boutry M."/>
            <person name="Cadieu E."/>
            <person name="Dreano S."/>
            <person name="Gloux S."/>
            <person name="Godrie T."/>
            <person name="Goffeau A."/>
            <person name="Kahn D."/>
            <person name="Kiss E."/>
            <person name="Lelaure V."/>
            <person name="Masuy D."/>
            <person name="Pohl T."/>
            <person name="Portetelle D."/>
            <person name="Puehler A."/>
            <person name="Purnelle B."/>
            <person name="Ramsperger U."/>
            <person name="Renard C."/>
            <person name="Thebault P."/>
            <person name="Vandenbol M."/>
            <person name="Weidner S."/>
            <person name="Galibert F."/>
        </authorList>
    </citation>
    <scope>NUCLEOTIDE SEQUENCE [LARGE SCALE GENOMIC DNA]</scope>
    <source>
        <strain>1021</strain>
    </source>
</reference>
<reference key="3">
    <citation type="journal article" date="2001" name="Science">
        <title>The composite genome of the legume symbiont Sinorhizobium meliloti.</title>
        <authorList>
            <person name="Galibert F."/>
            <person name="Finan T.M."/>
            <person name="Long S.R."/>
            <person name="Puehler A."/>
            <person name="Abola P."/>
            <person name="Ampe F."/>
            <person name="Barloy-Hubler F."/>
            <person name="Barnett M.J."/>
            <person name="Becker A."/>
            <person name="Boistard P."/>
            <person name="Bothe G."/>
            <person name="Boutry M."/>
            <person name="Bowser L."/>
            <person name="Buhrmester J."/>
            <person name="Cadieu E."/>
            <person name="Capela D."/>
            <person name="Chain P."/>
            <person name="Cowie A."/>
            <person name="Davis R.W."/>
            <person name="Dreano S."/>
            <person name="Federspiel N.A."/>
            <person name="Fisher R.F."/>
            <person name="Gloux S."/>
            <person name="Godrie T."/>
            <person name="Goffeau A."/>
            <person name="Golding B."/>
            <person name="Gouzy J."/>
            <person name="Gurjal M."/>
            <person name="Hernandez-Lucas I."/>
            <person name="Hong A."/>
            <person name="Huizar L."/>
            <person name="Hyman R.W."/>
            <person name="Jones T."/>
            <person name="Kahn D."/>
            <person name="Kahn M.L."/>
            <person name="Kalman S."/>
            <person name="Keating D.H."/>
            <person name="Kiss E."/>
            <person name="Komp C."/>
            <person name="Lelaure V."/>
            <person name="Masuy D."/>
            <person name="Palm C."/>
            <person name="Peck M.C."/>
            <person name="Pohl T.M."/>
            <person name="Portetelle D."/>
            <person name="Purnelle B."/>
            <person name="Ramsperger U."/>
            <person name="Surzycki R."/>
            <person name="Thebault P."/>
            <person name="Vandenbol M."/>
            <person name="Vorhoelter F.J."/>
            <person name="Weidner S."/>
            <person name="Wells D.H."/>
            <person name="Wong K."/>
            <person name="Yeh K.-C."/>
            <person name="Batut J."/>
        </authorList>
    </citation>
    <scope>NUCLEOTIDE SEQUENCE [LARGE SCALE GENOMIC DNA]</scope>
    <source>
        <strain>1021</strain>
    </source>
</reference>
<name>PITX_RHIME</name>
<sequence>MLGLFRKLLPREDRFFDLFADHSRTVMGAAEALNALLAGGPDIESHCDRIVALENEADEITREVLLAVRRSFITPFDRGDIKDLIQSMDDAIDMMHKTVKTIRLYEQKSFDPGMQAMGAAVVEAAHLVAEAIPLLSRIGANAHRLSAIAEEVTHVEDRSDQLHEQGLKDLFQRHGASNPMAYIIGSEIYGELEKVVDRFEDVANEISGIVIENV</sequence>
<feature type="chain" id="PRO_0000154904" description="Putative pit accessory protein">
    <location>
        <begin position="1"/>
        <end position="214"/>
    </location>
</feature>
<accession>O30498</accession>
<comment type="function">
    <text>Could be involved in orthophosphate transport.</text>
</comment>
<comment type="similarity">
    <text evidence="1">Belongs to the UPF0111 family.</text>
</comment>
<protein>
    <recommendedName>
        <fullName>Putative pit accessory protein</fullName>
    </recommendedName>
</protein>
<organism>
    <name type="scientific">Rhizobium meliloti (strain 1021)</name>
    <name type="common">Ensifer meliloti</name>
    <name type="synonym">Sinorhizobium meliloti</name>
    <dbReference type="NCBI Taxonomy" id="266834"/>
    <lineage>
        <taxon>Bacteria</taxon>
        <taxon>Pseudomonadati</taxon>
        <taxon>Pseudomonadota</taxon>
        <taxon>Alphaproteobacteria</taxon>
        <taxon>Hyphomicrobiales</taxon>
        <taxon>Rhizobiaceae</taxon>
        <taxon>Sinorhizobium/Ensifer group</taxon>
        <taxon>Sinorhizobium</taxon>
    </lineage>
</organism>
<proteinExistence type="inferred from homology"/>
<gene>
    <name type="ordered locus">R00187</name>
    <name type="ORF">SMc02862</name>
</gene>
<keyword id="KW-1185">Reference proteome</keyword>
<dbReference type="EMBL" id="AF008187">
    <property type="protein sequence ID" value="AAB70170.1"/>
    <property type="molecule type" value="Genomic_DNA"/>
</dbReference>
<dbReference type="EMBL" id="AL591688">
    <property type="protein sequence ID" value="CAC41574.1"/>
    <property type="molecule type" value="Genomic_DNA"/>
</dbReference>
<dbReference type="RefSeq" id="NP_384293.1">
    <property type="nucleotide sequence ID" value="NC_003047.1"/>
</dbReference>
<dbReference type="RefSeq" id="WP_010968411.1">
    <property type="nucleotide sequence ID" value="NC_003047.1"/>
</dbReference>
<dbReference type="SMR" id="O30498"/>
<dbReference type="EnsemblBacteria" id="CAC41574">
    <property type="protein sequence ID" value="CAC41574"/>
    <property type="gene ID" value="SMc02862"/>
</dbReference>
<dbReference type="KEGG" id="sme:SMc02862"/>
<dbReference type="PATRIC" id="fig|266834.11.peg.1549"/>
<dbReference type="eggNOG" id="COG1392">
    <property type="taxonomic scope" value="Bacteria"/>
</dbReference>
<dbReference type="HOGENOM" id="CLU_086031_2_1_5"/>
<dbReference type="OrthoDB" id="9797568at2"/>
<dbReference type="Proteomes" id="UP000001976">
    <property type="component" value="Chromosome"/>
</dbReference>
<dbReference type="Gene3D" id="1.20.58.220">
    <property type="entry name" value="Phosphate transport system protein phou homolog 2, domain 2"/>
    <property type="match status" value="1"/>
</dbReference>
<dbReference type="InterPro" id="IPR038078">
    <property type="entry name" value="PhoU-like_sf"/>
</dbReference>
<dbReference type="InterPro" id="IPR018445">
    <property type="entry name" value="Put_Phosphate_transp_reg"/>
</dbReference>
<dbReference type="InterPro" id="IPR052912">
    <property type="entry name" value="UPF0111_domain"/>
</dbReference>
<dbReference type="PANTHER" id="PTHR37298">
    <property type="entry name" value="UPF0111 PROTEIN YKAA"/>
    <property type="match status" value="1"/>
</dbReference>
<dbReference type="PANTHER" id="PTHR37298:SF1">
    <property type="entry name" value="UPF0111 PROTEIN YKAA"/>
    <property type="match status" value="1"/>
</dbReference>
<dbReference type="Pfam" id="PF01865">
    <property type="entry name" value="PhoU_div"/>
    <property type="match status" value="1"/>
</dbReference>
<dbReference type="SUPFAM" id="SSF109755">
    <property type="entry name" value="PhoU-like"/>
    <property type="match status" value="1"/>
</dbReference>
<evidence type="ECO:0000305" key="1"/>